<dbReference type="EC" id="7.1.1.-" evidence="2"/>
<dbReference type="EMBL" id="AE005674">
    <property type="protein sequence ID" value="AAN43868.1"/>
    <property type="molecule type" value="Genomic_DNA"/>
</dbReference>
<dbReference type="EMBL" id="AE014073">
    <property type="protein sequence ID" value="AAP17686.1"/>
    <property type="molecule type" value="Genomic_DNA"/>
</dbReference>
<dbReference type="RefSeq" id="NP_708161.1">
    <property type="nucleotide sequence ID" value="NC_004337.2"/>
</dbReference>
<dbReference type="RefSeq" id="WP_000612644.1">
    <property type="nucleotide sequence ID" value="NZ_WPGW01000084.1"/>
</dbReference>
<dbReference type="SMR" id="P0AFE7"/>
<dbReference type="STRING" id="198214.SF2355"/>
<dbReference type="PaxDb" id="198214-SF2355"/>
<dbReference type="GeneID" id="1025502"/>
<dbReference type="GeneID" id="93033872"/>
<dbReference type="KEGG" id="sfl:SF2355"/>
<dbReference type="KEGG" id="sfx:S2490"/>
<dbReference type="PATRIC" id="fig|198214.7.peg.2821"/>
<dbReference type="HOGENOM" id="CLU_144724_0_1_6"/>
<dbReference type="Proteomes" id="UP000001006">
    <property type="component" value="Chromosome"/>
</dbReference>
<dbReference type="Proteomes" id="UP000002673">
    <property type="component" value="Chromosome"/>
</dbReference>
<dbReference type="GO" id="GO:0030964">
    <property type="term" value="C:NADH dehydrogenase complex"/>
    <property type="evidence" value="ECO:0007669"/>
    <property type="project" value="TreeGrafter"/>
</dbReference>
<dbReference type="GO" id="GO:0005886">
    <property type="term" value="C:plasma membrane"/>
    <property type="evidence" value="ECO:0007669"/>
    <property type="project" value="UniProtKB-SubCell"/>
</dbReference>
<dbReference type="GO" id="GO:0050136">
    <property type="term" value="F:NADH:ubiquinone reductase (non-electrogenic) activity"/>
    <property type="evidence" value="ECO:0007669"/>
    <property type="project" value="UniProtKB-UniRule"/>
</dbReference>
<dbReference type="GO" id="GO:0048038">
    <property type="term" value="F:quinone binding"/>
    <property type="evidence" value="ECO:0007669"/>
    <property type="project" value="UniProtKB-KW"/>
</dbReference>
<dbReference type="GO" id="GO:0042773">
    <property type="term" value="P:ATP synthesis coupled electron transport"/>
    <property type="evidence" value="ECO:0007669"/>
    <property type="project" value="InterPro"/>
</dbReference>
<dbReference type="FunFam" id="1.10.287.3510:FF:000001">
    <property type="entry name" value="NADH-quinone oxidoreductase subunit K"/>
    <property type="match status" value="1"/>
</dbReference>
<dbReference type="Gene3D" id="1.10.287.3510">
    <property type="match status" value="1"/>
</dbReference>
<dbReference type="HAMAP" id="MF_01456">
    <property type="entry name" value="NDH1_NuoK"/>
    <property type="match status" value="1"/>
</dbReference>
<dbReference type="InterPro" id="IPR001133">
    <property type="entry name" value="NADH_UbQ_OxRdtase_chain4L/K"/>
</dbReference>
<dbReference type="InterPro" id="IPR039428">
    <property type="entry name" value="NUOK/Mnh_C1-like"/>
</dbReference>
<dbReference type="NCBIfam" id="NF004319">
    <property type="entry name" value="PRK05715.1-1"/>
    <property type="match status" value="1"/>
</dbReference>
<dbReference type="NCBIfam" id="NF004320">
    <property type="entry name" value="PRK05715.1-2"/>
    <property type="match status" value="1"/>
</dbReference>
<dbReference type="PANTHER" id="PTHR11434:SF16">
    <property type="entry name" value="NADH-UBIQUINONE OXIDOREDUCTASE CHAIN 4L"/>
    <property type="match status" value="1"/>
</dbReference>
<dbReference type="PANTHER" id="PTHR11434">
    <property type="entry name" value="NADH-UBIQUINONE OXIDOREDUCTASE SUBUNIT ND4L"/>
    <property type="match status" value="1"/>
</dbReference>
<dbReference type="Pfam" id="PF00420">
    <property type="entry name" value="Oxidored_q2"/>
    <property type="match status" value="1"/>
</dbReference>
<sequence>MIPLQHGLILAAILFVLGLTGLVIRRNLLFMLIGLEIMINASALAFVVAGSYWGQTDGQVMYILAISLAAAEASIGLALLLQLHRRRQNLNIDSVSEMRG</sequence>
<keyword id="KW-0997">Cell inner membrane</keyword>
<keyword id="KW-1003">Cell membrane</keyword>
<keyword id="KW-0472">Membrane</keyword>
<keyword id="KW-0520">NAD</keyword>
<keyword id="KW-0874">Quinone</keyword>
<keyword id="KW-1185">Reference proteome</keyword>
<keyword id="KW-1278">Translocase</keyword>
<keyword id="KW-0812">Transmembrane</keyword>
<keyword id="KW-1133">Transmembrane helix</keyword>
<keyword id="KW-0813">Transport</keyword>
<keyword id="KW-0830">Ubiquinone</keyword>
<accession>P0AFE7</accession>
<accession>P33606</accession>
<accession>P76487</accession>
<accession>P78182</accession>
<name>NUOK_SHIFL</name>
<gene>
    <name evidence="2" type="primary">nuoK</name>
    <name type="ordered locus">SF2355</name>
    <name type="ordered locus">S2490</name>
</gene>
<reference key="1">
    <citation type="journal article" date="2002" name="Nucleic Acids Res.">
        <title>Genome sequence of Shigella flexneri 2a: insights into pathogenicity through comparison with genomes of Escherichia coli K12 and O157.</title>
        <authorList>
            <person name="Jin Q."/>
            <person name="Yuan Z."/>
            <person name="Xu J."/>
            <person name="Wang Y."/>
            <person name="Shen Y."/>
            <person name="Lu W."/>
            <person name="Wang J."/>
            <person name="Liu H."/>
            <person name="Yang J."/>
            <person name="Yang F."/>
            <person name="Zhang X."/>
            <person name="Zhang J."/>
            <person name="Yang G."/>
            <person name="Wu H."/>
            <person name="Qu D."/>
            <person name="Dong J."/>
            <person name="Sun L."/>
            <person name="Xue Y."/>
            <person name="Zhao A."/>
            <person name="Gao Y."/>
            <person name="Zhu J."/>
            <person name="Kan B."/>
            <person name="Ding K."/>
            <person name="Chen S."/>
            <person name="Cheng H."/>
            <person name="Yao Z."/>
            <person name="He B."/>
            <person name="Chen R."/>
            <person name="Ma D."/>
            <person name="Qiang B."/>
            <person name="Wen Y."/>
            <person name="Hou Y."/>
            <person name="Yu J."/>
        </authorList>
    </citation>
    <scope>NUCLEOTIDE SEQUENCE [LARGE SCALE GENOMIC DNA]</scope>
    <source>
        <strain>301 / Serotype 2a</strain>
    </source>
</reference>
<reference key="2">
    <citation type="journal article" date="2003" name="Infect. Immun.">
        <title>Complete genome sequence and comparative genomics of Shigella flexneri serotype 2a strain 2457T.</title>
        <authorList>
            <person name="Wei J."/>
            <person name="Goldberg M.B."/>
            <person name="Burland V."/>
            <person name="Venkatesan M.M."/>
            <person name="Deng W."/>
            <person name="Fournier G."/>
            <person name="Mayhew G.F."/>
            <person name="Plunkett G. III"/>
            <person name="Rose D.J."/>
            <person name="Darling A."/>
            <person name="Mau B."/>
            <person name="Perna N.T."/>
            <person name="Payne S.M."/>
            <person name="Runyen-Janecky L.J."/>
            <person name="Zhou S."/>
            <person name="Schwartz D.C."/>
            <person name="Blattner F.R."/>
        </authorList>
    </citation>
    <scope>NUCLEOTIDE SEQUENCE [LARGE SCALE GENOMIC DNA]</scope>
    <source>
        <strain>ATCC 700930 / 2457T / Serotype 2a</strain>
    </source>
</reference>
<comment type="function">
    <text evidence="2">NDH-1 shuttles electrons from NADH, via FMN and iron-sulfur (Fe-S) centers, to quinones in the respiratory chain. The immediate electron acceptor for the enzyme in this species is believed to be ubiquinone. Couples the redox reaction to proton translocation (for every two electrons transferred, four hydrogen ions are translocated across the cytoplasmic membrane), and thus conserves the redox energy in a proton gradient.</text>
</comment>
<comment type="catalytic activity">
    <reaction evidence="2">
        <text>a quinone + NADH + 5 H(+)(in) = a quinol + NAD(+) + 4 H(+)(out)</text>
        <dbReference type="Rhea" id="RHEA:57888"/>
        <dbReference type="ChEBI" id="CHEBI:15378"/>
        <dbReference type="ChEBI" id="CHEBI:24646"/>
        <dbReference type="ChEBI" id="CHEBI:57540"/>
        <dbReference type="ChEBI" id="CHEBI:57945"/>
        <dbReference type="ChEBI" id="CHEBI:132124"/>
    </reaction>
</comment>
<comment type="subunit">
    <text evidence="2">NDH-1 is composed of 13 different subunits. Subunits NuoA, H, J, K, L, M, N constitute the membrane sector of the complex.</text>
</comment>
<comment type="subcellular location">
    <subcellularLocation>
        <location evidence="2">Cell inner membrane</location>
        <topology evidence="2">Multi-pass membrane protein</topology>
    </subcellularLocation>
</comment>
<comment type="similarity">
    <text evidence="2">Belongs to the complex I subunit 4L family.</text>
</comment>
<organism>
    <name type="scientific">Shigella flexneri</name>
    <dbReference type="NCBI Taxonomy" id="623"/>
    <lineage>
        <taxon>Bacteria</taxon>
        <taxon>Pseudomonadati</taxon>
        <taxon>Pseudomonadota</taxon>
        <taxon>Gammaproteobacteria</taxon>
        <taxon>Enterobacterales</taxon>
        <taxon>Enterobacteriaceae</taxon>
        <taxon>Shigella</taxon>
    </lineage>
</organism>
<evidence type="ECO:0000255" key="1"/>
<evidence type="ECO:0000255" key="2">
    <source>
        <dbReference type="HAMAP-Rule" id="MF_01456"/>
    </source>
</evidence>
<proteinExistence type="inferred from homology"/>
<protein>
    <recommendedName>
        <fullName evidence="2">NADH-quinone oxidoreductase subunit K</fullName>
        <ecNumber evidence="2">7.1.1.-</ecNumber>
    </recommendedName>
    <alternativeName>
        <fullName evidence="2">NADH dehydrogenase I subunit K</fullName>
    </alternativeName>
    <alternativeName>
        <fullName evidence="2">NDH-1 subunit K</fullName>
    </alternativeName>
</protein>
<feature type="chain" id="PRO_0000118527" description="NADH-quinone oxidoreductase subunit K">
    <location>
        <begin position="1"/>
        <end position="100"/>
    </location>
</feature>
<feature type="topological domain" description="Periplasmic" evidence="1">
    <location>
        <begin position="1"/>
        <end position="3"/>
    </location>
</feature>
<feature type="transmembrane region" description="Helical" evidence="2">
    <location>
        <begin position="4"/>
        <end position="24"/>
    </location>
</feature>
<feature type="topological domain" description="Cytoplasmic" evidence="1">
    <location>
        <begin position="25"/>
        <end position="27"/>
    </location>
</feature>
<feature type="transmembrane region" description="Helical" evidence="2">
    <location>
        <begin position="28"/>
        <end position="48"/>
    </location>
</feature>
<feature type="topological domain" description="Periplasmic" evidence="1">
    <location>
        <begin position="49"/>
        <end position="59"/>
    </location>
</feature>
<feature type="transmembrane region" description="Helical" evidence="2">
    <location>
        <begin position="60"/>
        <end position="80"/>
    </location>
</feature>
<feature type="topological domain" description="Cytoplasmic" evidence="1">
    <location>
        <begin position="81"/>
        <end position="100"/>
    </location>
</feature>